<reference key="1">
    <citation type="journal article" date="2000" name="DNA Res.">
        <title>Complete genome structure of the nitrogen-fixing symbiotic bacterium Mesorhizobium loti.</title>
        <authorList>
            <person name="Kaneko T."/>
            <person name="Nakamura Y."/>
            <person name="Sato S."/>
            <person name="Asamizu E."/>
            <person name="Kato T."/>
            <person name="Sasamoto S."/>
            <person name="Watanabe A."/>
            <person name="Idesawa K."/>
            <person name="Ishikawa A."/>
            <person name="Kawashima K."/>
            <person name="Kimura T."/>
            <person name="Kishida Y."/>
            <person name="Kiyokawa C."/>
            <person name="Kohara M."/>
            <person name="Matsumoto M."/>
            <person name="Matsuno A."/>
            <person name="Mochizuki Y."/>
            <person name="Nakayama S."/>
            <person name="Nakazaki N."/>
            <person name="Shimpo S."/>
            <person name="Sugimoto M."/>
            <person name="Takeuchi C."/>
            <person name="Yamada M."/>
            <person name="Tabata S."/>
        </authorList>
    </citation>
    <scope>NUCLEOTIDE SEQUENCE [LARGE SCALE GENOMIC DNA]</scope>
    <source>
        <strain>LMG 29417 / CECT 9101 / MAFF 303099</strain>
    </source>
</reference>
<proteinExistence type="inferred from homology"/>
<protein>
    <recommendedName>
        <fullName evidence="1">1-aminocyclopropane-1-carboxylate deaminase</fullName>
        <shortName evidence="1">ACC deaminase</shortName>
        <shortName evidence="1">ACCD</shortName>
        <ecNumber evidence="1">3.5.99.7</ecNumber>
    </recommendedName>
</protein>
<gene>
    <name evidence="1" type="primary">acdS</name>
    <name type="ordered locus">mlr5932</name>
</gene>
<sequence>MLEKFERYPLTFGLTPIEKLDRLGKHLGGKVEIYAKREDCNSGLAFGGNKLRKLEYVIPDAIASDADTLVTVGGVQSNHTRMVAAVAAKIGMKCLLVHESWVPHEDVVYDRVGNILLSRILGAEVRLVDDGFDIGIRRSWEKALYEVKARGGRPYAIPAGASVHPNGGLGYVGFAEEVRAQEEQLGFAFDYMVVCTVTGSTHAGMLVGFAKDGRQRNVIGIDASATPAKTKAQVLSIARHTATLVELGSELAEDDVVLLEDYAHPRYGIPSEETKEAIRLCARLEGMITDPVYEGKSMQGMIDLVQKGFFPAGSRILYAHLGGAPAINGYGYTFRNG</sequence>
<dbReference type="EC" id="3.5.99.7" evidence="1"/>
<dbReference type="EMBL" id="BA000012">
    <property type="protein sequence ID" value="BAB52295.1"/>
    <property type="molecule type" value="Genomic_DNA"/>
</dbReference>
<dbReference type="RefSeq" id="WP_010913628.1">
    <property type="nucleotide sequence ID" value="NC_002678.2"/>
</dbReference>
<dbReference type="SMR" id="Q98AM7"/>
<dbReference type="KEGG" id="mlo:mlr5932"/>
<dbReference type="PATRIC" id="fig|266835.9.peg.4718"/>
<dbReference type="eggNOG" id="COG2515">
    <property type="taxonomic scope" value="Bacteria"/>
</dbReference>
<dbReference type="HOGENOM" id="CLU_048897_2_1_5"/>
<dbReference type="Proteomes" id="UP000000552">
    <property type="component" value="Chromosome"/>
</dbReference>
<dbReference type="GO" id="GO:0008660">
    <property type="term" value="F:1-aminocyclopropane-1-carboxylate deaminase activity"/>
    <property type="evidence" value="ECO:0007669"/>
    <property type="project" value="UniProtKB-UniRule"/>
</dbReference>
<dbReference type="GO" id="GO:0019148">
    <property type="term" value="F:D-cysteine desulfhydrase activity"/>
    <property type="evidence" value="ECO:0007669"/>
    <property type="project" value="TreeGrafter"/>
</dbReference>
<dbReference type="GO" id="GO:0030170">
    <property type="term" value="F:pyridoxal phosphate binding"/>
    <property type="evidence" value="ECO:0007669"/>
    <property type="project" value="InterPro"/>
</dbReference>
<dbReference type="GO" id="GO:0018871">
    <property type="term" value="P:1-aminocyclopropane-1-carboxylate metabolic process"/>
    <property type="evidence" value="ECO:0007669"/>
    <property type="project" value="UniProtKB-UniRule"/>
</dbReference>
<dbReference type="GO" id="GO:0009310">
    <property type="term" value="P:amine catabolic process"/>
    <property type="evidence" value="ECO:0007669"/>
    <property type="project" value="InterPro"/>
</dbReference>
<dbReference type="CDD" id="cd06449">
    <property type="entry name" value="ACCD"/>
    <property type="match status" value="1"/>
</dbReference>
<dbReference type="Gene3D" id="3.40.50.1100">
    <property type="match status" value="2"/>
</dbReference>
<dbReference type="HAMAP" id="MF_00807">
    <property type="entry name" value="ACC_deaminase"/>
    <property type="match status" value="1"/>
</dbReference>
<dbReference type="InterPro" id="IPR027278">
    <property type="entry name" value="ACCD_DCysDesulf"/>
</dbReference>
<dbReference type="InterPro" id="IPR005965">
    <property type="entry name" value="ACP_carboxylate_deaminase"/>
</dbReference>
<dbReference type="InterPro" id="IPR020601">
    <property type="entry name" value="ACP_carboxylate_deaminase_bac"/>
</dbReference>
<dbReference type="InterPro" id="IPR001926">
    <property type="entry name" value="TrpB-like_PALP"/>
</dbReference>
<dbReference type="InterPro" id="IPR036052">
    <property type="entry name" value="TrpB-like_PALP_sf"/>
</dbReference>
<dbReference type="NCBIfam" id="TIGR01274">
    <property type="entry name" value="ACC_deam"/>
    <property type="match status" value="1"/>
</dbReference>
<dbReference type="PANTHER" id="PTHR43780">
    <property type="entry name" value="1-AMINOCYCLOPROPANE-1-CARBOXYLATE DEAMINASE-RELATED"/>
    <property type="match status" value="1"/>
</dbReference>
<dbReference type="PANTHER" id="PTHR43780:SF2">
    <property type="entry name" value="1-AMINOCYCLOPROPANE-1-CARBOXYLATE DEAMINASE-RELATED"/>
    <property type="match status" value="1"/>
</dbReference>
<dbReference type="Pfam" id="PF00291">
    <property type="entry name" value="PALP"/>
    <property type="match status" value="1"/>
</dbReference>
<dbReference type="PIRSF" id="PIRSF006278">
    <property type="entry name" value="ACCD_DCysDesulf"/>
    <property type="match status" value="1"/>
</dbReference>
<dbReference type="SUPFAM" id="SSF53686">
    <property type="entry name" value="Tryptophan synthase beta subunit-like PLP-dependent enzymes"/>
    <property type="match status" value="1"/>
</dbReference>
<accession>Q98AM7</accession>
<organism>
    <name type="scientific">Mesorhizobium japonicum (strain LMG 29417 / CECT 9101 / MAFF 303099)</name>
    <name type="common">Mesorhizobium loti (strain MAFF 303099)</name>
    <dbReference type="NCBI Taxonomy" id="266835"/>
    <lineage>
        <taxon>Bacteria</taxon>
        <taxon>Pseudomonadati</taxon>
        <taxon>Pseudomonadota</taxon>
        <taxon>Alphaproteobacteria</taxon>
        <taxon>Hyphomicrobiales</taxon>
        <taxon>Phyllobacteriaceae</taxon>
        <taxon>Mesorhizobium</taxon>
    </lineage>
</organism>
<feature type="chain" id="PRO_0000184508" description="1-aminocyclopropane-1-carboxylate deaminase">
    <location>
        <begin position="1"/>
        <end position="337"/>
    </location>
</feature>
<feature type="modified residue" description="N6-(pyridoxal phosphate)lysine" evidence="1">
    <location>
        <position position="50"/>
    </location>
</feature>
<comment type="function">
    <text evidence="1">Catalyzes a cyclopropane ring-opening reaction, the irreversible conversion of 1-aminocyclopropane-1-carboxylate (ACC) to ammonia and alpha-ketobutyrate. Allows growth on ACC as a nitrogen source.</text>
</comment>
<comment type="catalytic activity">
    <reaction evidence="1">
        <text>1-aminocyclopropane-1-carboxylate + H2O = 2-oxobutanoate + NH4(+)</text>
        <dbReference type="Rhea" id="RHEA:16933"/>
        <dbReference type="ChEBI" id="CHEBI:15377"/>
        <dbReference type="ChEBI" id="CHEBI:16763"/>
        <dbReference type="ChEBI" id="CHEBI:28938"/>
        <dbReference type="ChEBI" id="CHEBI:58360"/>
        <dbReference type="EC" id="3.5.99.7"/>
    </reaction>
</comment>
<comment type="cofactor">
    <cofactor evidence="1">
        <name>pyridoxal 5'-phosphate</name>
        <dbReference type="ChEBI" id="CHEBI:597326"/>
    </cofactor>
</comment>
<comment type="subunit">
    <text evidence="1">Homotrimer.</text>
</comment>
<comment type="similarity">
    <text evidence="1">Belongs to the ACC deaminase/D-cysteine desulfhydrase family.</text>
</comment>
<keyword id="KW-0378">Hydrolase</keyword>
<keyword id="KW-0663">Pyridoxal phosphate</keyword>
<evidence type="ECO:0000255" key="1">
    <source>
        <dbReference type="HAMAP-Rule" id="MF_00807"/>
    </source>
</evidence>
<name>1A1D_RHILO</name>